<comment type="function">
    <text evidence="3">Functions as a flavone synthase II (FNSII) that catalyzes the direct conversion of flavanones to flavones (PubMed:10652133). In vitro, can convert liquiritigenin, naringenin and eriodictyol to 7,4'-dihydroxyflavone, apigenin and luteolin, respectively (PubMed:10652133).</text>
</comment>
<comment type="catalytic activity">
    <reaction evidence="3">
        <text>a flavanone + reduced [NADPH--hemoprotein reductase] + O2 = a flavone + oxidized [NADPH--hemoprotein reductase] + 2 H2O + H(+)</text>
        <dbReference type="Rhea" id="RHEA:57680"/>
        <dbReference type="Rhea" id="RHEA-COMP:11964"/>
        <dbReference type="Rhea" id="RHEA-COMP:11965"/>
        <dbReference type="ChEBI" id="CHEBI:15377"/>
        <dbReference type="ChEBI" id="CHEBI:15378"/>
        <dbReference type="ChEBI" id="CHEBI:15379"/>
        <dbReference type="ChEBI" id="CHEBI:24043"/>
        <dbReference type="ChEBI" id="CHEBI:28863"/>
        <dbReference type="ChEBI" id="CHEBI:57618"/>
        <dbReference type="ChEBI" id="CHEBI:58210"/>
        <dbReference type="EC" id="1.14.19.76"/>
    </reaction>
    <physiologicalReaction direction="left-to-right" evidence="3">
        <dbReference type="Rhea" id="RHEA:57681"/>
    </physiologicalReaction>
</comment>
<comment type="cofactor">
    <cofactor evidence="1">
        <name>heme</name>
        <dbReference type="ChEBI" id="CHEBI:30413"/>
    </cofactor>
</comment>
<comment type="pathway">
    <text evidence="5">Secondary metabolite biosynthesis; flavonoid biosynthesis.</text>
</comment>
<comment type="subcellular location">
    <subcellularLocation>
        <location evidence="2">Membrane</location>
        <topology evidence="2">Single-pass membrane protein</topology>
    </subcellularLocation>
</comment>
<comment type="similarity">
    <text evidence="5">Belongs to the cytochrome P450 family.</text>
</comment>
<sequence length="511" mass="58217">MNTLQLIFLLFFFPTLLFLYCLPYKRNQNHRRLPPSPPSFPIIGHLHHLGPLIHQSFHALSTRYGSLIHLRLGSVPCVVVSTPDLAKDFLKTNELAFSSRKHSLAIDHITYGVAFAFAPYGTYWKFIKKLFTVELLGTQNLSHFLPIRTHEIRELLRTLMVKSRAKERVNLTEELLKLTNNVISQMMMSIRCSGTNSEADEAKNLVREVTKIFGQFNVSDFIWFCKNIDLQGFKKRYEGTHRRYDALLERIIMGREENRRRGKIKDGEGKDFLDMLLDVLEDGKAEIKITRDHIKALILDFLTAGTDTTAIAIEWALVELINNPNALEKARQEIDQVIGDERLVQESDTPNLPYIQAIIKEALRLHPPIPMLIRKSTENVIVQGYDIPAGTLLFVNIWSIGRNPQCWETPLEFKPHRFLDGGDLKSSLDIKGHNFQLLPFGTGRRGCPGVNLAMRELSVVIANLIQCFDWDVVGERLLNTDERAGLTAPRAVDFVCVPLERGNTLKILGSN</sequence>
<protein>
    <recommendedName>
        <fullName evidence="4">Cytochrome P450 93B2</fullName>
        <ecNumber evidence="3">1.14.19.76</ecNumber>
    </recommendedName>
    <alternativeName>
        <fullName evidence="4">Flavone synthase II</fullName>
        <shortName evidence="4">FNSII</shortName>
    </alternativeName>
</protein>
<gene>
    <name evidence="4" type="primary">CYP93B2</name>
</gene>
<reference key="1">
    <citation type="journal article" date="1999" name="Plant J.">
        <title>Cloning and expression of flavone synthase II from Gerbera hybrids.</title>
        <authorList>
            <person name="Martens S."/>
            <person name="Forkmann G."/>
        </authorList>
    </citation>
    <scope>NUCLEOTIDE SEQUENCE [MRNA]</scope>
    <scope>FUNCTION</scope>
    <scope>CATALYTIC ACTIVITY</scope>
</reference>
<feature type="chain" id="PRO_0000452209" description="Cytochrome P450 93B2">
    <location>
        <begin position="1"/>
        <end position="511"/>
    </location>
</feature>
<feature type="transmembrane region" description="Helical" evidence="2">
    <location>
        <begin position="4"/>
        <end position="24"/>
    </location>
</feature>
<feature type="binding site" description="axial binding residue" evidence="1">
    <location>
        <position position="447"/>
    </location>
    <ligand>
        <name>heme</name>
        <dbReference type="ChEBI" id="CHEBI:30413"/>
    </ligand>
    <ligandPart>
        <name>Fe</name>
        <dbReference type="ChEBI" id="CHEBI:18248"/>
    </ligandPart>
</feature>
<evidence type="ECO:0000250" key="1">
    <source>
        <dbReference type="UniProtKB" id="Q94IP1"/>
    </source>
</evidence>
<evidence type="ECO:0000255" key="2"/>
<evidence type="ECO:0000269" key="3">
    <source>
    </source>
</evidence>
<evidence type="ECO:0000303" key="4">
    <source>
    </source>
</evidence>
<evidence type="ECO:0000305" key="5"/>
<dbReference type="EC" id="1.14.19.76" evidence="3"/>
<dbReference type="EMBL" id="AF156976">
    <property type="protein sequence ID" value="AAD39549.1"/>
    <property type="molecule type" value="mRNA"/>
</dbReference>
<dbReference type="SMR" id="Q9XGT9"/>
<dbReference type="KEGG" id="ag:AAD39549"/>
<dbReference type="BRENDA" id="1.14.19.76">
    <property type="organism ID" value="2420"/>
</dbReference>
<dbReference type="UniPathway" id="UPA00154"/>
<dbReference type="GO" id="GO:0016020">
    <property type="term" value="C:membrane"/>
    <property type="evidence" value="ECO:0007669"/>
    <property type="project" value="UniProtKB-SubCell"/>
</dbReference>
<dbReference type="GO" id="GO:0020037">
    <property type="term" value="F:heme binding"/>
    <property type="evidence" value="ECO:0007669"/>
    <property type="project" value="InterPro"/>
</dbReference>
<dbReference type="GO" id="GO:0005506">
    <property type="term" value="F:iron ion binding"/>
    <property type="evidence" value="ECO:0007669"/>
    <property type="project" value="InterPro"/>
</dbReference>
<dbReference type="GO" id="GO:0004497">
    <property type="term" value="F:monooxygenase activity"/>
    <property type="evidence" value="ECO:0007669"/>
    <property type="project" value="UniProtKB-KW"/>
</dbReference>
<dbReference type="GO" id="GO:0016717">
    <property type="term" value="F:oxidoreductase activity, acting on paired donors, with oxidation of a pair of donors resulting in the reduction of molecular oxygen to two molecules of water"/>
    <property type="evidence" value="ECO:0000314"/>
    <property type="project" value="UniProtKB"/>
</dbReference>
<dbReference type="GO" id="GO:0051553">
    <property type="term" value="P:flavone biosynthetic process"/>
    <property type="evidence" value="ECO:0000314"/>
    <property type="project" value="UniProtKB"/>
</dbReference>
<dbReference type="CDD" id="cd20655">
    <property type="entry name" value="CYP93"/>
    <property type="match status" value="1"/>
</dbReference>
<dbReference type="FunFam" id="1.10.630.10:FF:000019">
    <property type="entry name" value="Cytochrome P450 family protein"/>
    <property type="match status" value="1"/>
</dbReference>
<dbReference type="Gene3D" id="1.10.630.10">
    <property type="entry name" value="Cytochrome P450"/>
    <property type="match status" value="1"/>
</dbReference>
<dbReference type="InterPro" id="IPR001128">
    <property type="entry name" value="Cyt_P450"/>
</dbReference>
<dbReference type="InterPro" id="IPR017972">
    <property type="entry name" value="Cyt_P450_CS"/>
</dbReference>
<dbReference type="InterPro" id="IPR002401">
    <property type="entry name" value="Cyt_P450_E_grp-I"/>
</dbReference>
<dbReference type="InterPro" id="IPR036396">
    <property type="entry name" value="Cyt_P450_sf"/>
</dbReference>
<dbReference type="PANTHER" id="PTHR47943:SF8">
    <property type="entry name" value="CYTOCHROME P450"/>
    <property type="match status" value="1"/>
</dbReference>
<dbReference type="PANTHER" id="PTHR47943">
    <property type="entry name" value="CYTOCHROME P450 93A3-LIKE"/>
    <property type="match status" value="1"/>
</dbReference>
<dbReference type="Pfam" id="PF00067">
    <property type="entry name" value="p450"/>
    <property type="match status" value="1"/>
</dbReference>
<dbReference type="PRINTS" id="PR00463">
    <property type="entry name" value="EP450I"/>
</dbReference>
<dbReference type="PRINTS" id="PR00385">
    <property type="entry name" value="P450"/>
</dbReference>
<dbReference type="SUPFAM" id="SSF48264">
    <property type="entry name" value="Cytochrome P450"/>
    <property type="match status" value="1"/>
</dbReference>
<dbReference type="PROSITE" id="PS00086">
    <property type="entry name" value="CYTOCHROME_P450"/>
    <property type="match status" value="1"/>
</dbReference>
<keyword id="KW-0284">Flavonoid biosynthesis</keyword>
<keyword id="KW-0349">Heme</keyword>
<keyword id="KW-0408">Iron</keyword>
<keyword id="KW-0472">Membrane</keyword>
<keyword id="KW-0479">Metal-binding</keyword>
<keyword id="KW-0503">Monooxygenase</keyword>
<keyword id="KW-0560">Oxidoreductase</keyword>
<keyword id="KW-0812">Transmembrane</keyword>
<keyword id="KW-1133">Transmembrane helix</keyword>
<accession>Q9XGT9</accession>
<organism>
    <name type="scientific">Gerbera hybrida</name>
    <name type="common">Daisy</name>
    <dbReference type="NCBI Taxonomy" id="18101"/>
    <lineage>
        <taxon>Eukaryota</taxon>
        <taxon>Viridiplantae</taxon>
        <taxon>Streptophyta</taxon>
        <taxon>Embryophyta</taxon>
        <taxon>Tracheophyta</taxon>
        <taxon>Spermatophyta</taxon>
        <taxon>Magnoliopsida</taxon>
        <taxon>eudicotyledons</taxon>
        <taxon>Gunneridae</taxon>
        <taxon>Pentapetalae</taxon>
        <taxon>asterids</taxon>
        <taxon>campanulids</taxon>
        <taxon>Asterales</taxon>
        <taxon>Asteraceae</taxon>
        <taxon>Mutisioideae</taxon>
        <taxon>Mutisieae</taxon>
        <taxon>Gerbera</taxon>
    </lineage>
</organism>
<name>C93B2_GERHY</name>
<proteinExistence type="evidence at protein level"/>